<proteinExistence type="inferred from homology"/>
<evidence type="ECO:0000255" key="1">
    <source>
        <dbReference type="HAMAP-Rule" id="MF_00823"/>
    </source>
</evidence>
<evidence type="ECO:0000255" key="2">
    <source>
        <dbReference type="PROSITE-ProRule" id="PRU01137"/>
    </source>
</evidence>
<accession>A7ZHS5</accession>
<feature type="chain" id="PRO_1000062611" description="Acetyl-coenzyme A carboxylase carboxyl transferase subunit alpha">
    <location>
        <begin position="1"/>
        <end position="319"/>
    </location>
</feature>
<feature type="domain" description="CoA carboxyltransferase C-terminal" evidence="2">
    <location>
        <begin position="35"/>
        <end position="296"/>
    </location>
</feature>
<protein>
    <recommendedName>
        <fullName evidence="1">Acetyl-coenzyme A carboxylase carboxyl transferase subunit alpha</fullName>
        <shortName evidence="1">ACCase subunit alpha</shortName>
        <shortName evidence="1">Acetyl-CoA carboxylase carboxyltransferase subunit alpha</shortName>
        <ecNumber evidence="1">2.1.3.15</ecNumber>
    </recommendedName>
</protein>
<dbReference type="EC" id="2.1.3.15" evidence="1"/>
<dbReference type="EMBL" id="CP000800">
    <property type="protein sequence ID" value="ABV17488.1"/>
    <property type="molecule type" value="Genomic_DNA"/>
</dbReference>
<dbReference type="RefSeq" id="WP_000055741.1">
    <property type="nucleotide sequence ID" value="NC_009801.1"/>
</dbReference>
<dbReference type="SMR" id="A7ZHS5"/>
<dbReference type="GeneID" id="86945115"/>
<dbReference type="KEGG" id="ecw:EcE24377A_0189"/>
<dbReference type="HOGENOM" id="CLU_015486_0_2_6"/>
<dbReference type="UniPathway" id="UPA00655">
    <property type="reaction ID" value="UER00711"/>
</dbReference>
<dbReference type="Proteomes" id="UP000001122">
    <property type="component" value="Chromosome"/>
</dbReference>
<dbReference type="GO" id="GO:0009317">
    <property type="term" value="C:acetyl-CoA carboxylase complex"/>
    <property type="evidence" value="ECO:0007669"/>
    <property type="project" value="InterPro"/>
</dbReference>
<dbReference type="GO" id="GO:0003989">
    <property type="term" value="F:acetyl-CoA carboxylase activity"/>
    <property type="evidence" value="ECO:0007669"/>
    <property type="project" value="InterPro"/>
</dbReference>
<dbReference type="GO" id="GO:0005524">
    <property type="term" value="F:ATP binding"/>
    <property type="evidence" value="ECO:0007669"/>
    <property type="project" value="UniProtKB-KW"/>
</dbReference>
<dbReference type="GO" id="GO:0016743">
    <property type="term" value="F:carboxyl- or carbamoyltransferase activity"/>
    <property type="evidence" value="ECO:0007669"/>
    <property type="project" value="UniProtKB-UniRule"/>
</dbReference>
<dbReference type="GO" id="GO:0006633">
    <property type="term" value="P:fatty acid biosynthetic process"/>
    <property type="evidence" value="ECO:0007669"/>
    <property type="project" value="UniProtKB-KW"/>
</dbReference>
<dbReference type="GO" id="GO:2001295">
    <property type="term" value="P:malonyl-CoA biosynthetic process"/>
    <property type="evidence" value="ECO:0007669"/>
    <property type="project" value="UniProtKB-UniRule"/>
</dbReference>
<dbReference type="FunFam" id="3.90.226.10:FF:000008">
    <property type="entry name" value="Acetyl-coenzyme A carboxylase carboxyl transferase subunit alpha"/>
    <property type="match status" value="1"/>
</dbReference>
<dbReference type="Gene3D" id="3.90.226.10">
    <property type="entry name" value="2-enoyl-CoA Hydratase, Chain A, domain 1"/>
    <property type="match status" value="1"/>
</dbReference>
<dbReference type="HAMAP" id="MF_00823">
    <property type="entry name" value="AcetylCoA_CT_alpha"/>
    <property type="match status" value="1"/>
</dbReference>
<dbReference type="InterPro" id="IPR001095">
    <property type="entry name" value="Acetyl_CoA_COase_a_su"/>
</dbReference>
<dbReference type="InterPro" id="IPR029045">
    <property type="entry name" value="ClpP/crotonase-like_dom_sf"/>
</dbReference>
<dbReference type="InterPro" id="IPR011763">
    <property type="entry name" value="COA_CT_C"/>
</dbReference>
<dbReference type="NCBIfam" id="TIGR00513">
    <property type="entry name" value="accA"/>
    <property type="match status" value="1"/>
</dbReference>
<dbReference type="NCBIfam" id="NF041504">
    <property type="entry name" value="AccA_sub"/>
    <property type="match status" value="1"/>
</dbReference>
<dbReference type="NCBIfam" id="NF004344">
    <property type="entry name" value="PRK05724.1"/>
    <property type="match status" value="1"/>
</dbReference>
<dbReference type="PANTHER" id="PTHR42853">
    <property type="entry name" value="ACETYL-COENZYME A CARBOXYLASE CARBOXYL TRANSFERASE SUBUNIT ALPHA"/>
    <property type="match status" value="1"/>
</dbReference>
<dbReference type="PANTHER" id="PTHR42853:SF3">
    <property type="entry name" value="ACETYL-COENZYME A CARBOXYLASE CARBOXYL TRANSFERASE SUBUNIT ALPHA, CHLOROPLASTIC"/>
    <property type="match status" value="1"/>
</dbReference>
<dbReference type="Pfam" id="PF03255">
    <property type="entry name" value="ACCA"/>
    <property type="match status" value="1"/>
</dbReference>
<dbReference type="PRINTS" id="PR01069">
    <property type="entry name" value="ACCCTRFRASEA"/>
</dbReference>
<dbReference type="SUPFAM" id="SSF52096">
    <property type="entry name" value="ClpP/crotonase"/>
    <property type="match status" value="1"/>
</dbReference>
<dbReference type="PROSITE" id="PS50989">
    <property type="entry name" value="COA_CT_CTER"/>
    <property type="match status" value="1"/>
</dbReference>
<name>ACCA_ECO24</name>
<sequence>MSLNFLDFEQPIAELEAKIDSLTAVSRQDEKLDINIDEEVHRLREKSVELTRKIFADLGAWQIAQLARHPQRPYTLDYVRLAFDEFDELAGDRAYADDKAIVGGIARLDGRPVMIIGHQKGRETKEKIRRNFGMPAPEGYRKALRLMQMAERFKMPIITFIDTPGAYPGVGAEERGQSEAIARNLREMSRLGVPVVCTVIGEGGSGGALAIGVGDKVNMLQYSTYSVISPEGCASILWKSADKAPLAAEAMGIIAPRLKELKLIDSIIPEPLGGAHRNPEAMAASLKAQLLADLADLDVLSTEDLKNRRYQRLMSYGYA</sequence>
<gene>
    <name evidence="1" type="primary">accA</name>
    <name type="ordered locus">EcE24377A_0189</name>
</gene>
<comment type="function">
    <text evidence="1">Component of the acetyl coenzyme A carboxylase (ACC) complex. First, biotin carboxylase catalyzes the carboxylation of biotin on its carrier protein (BCCP) and then the CO(2) group is transferred by the carboxyltransferase to acetyl-CoA to form malonyl-CoA.</text>
</comment>
<comment type="catalytic activity">
    <reaction evidence="1">
        <text>N(6)-carboxybiotinyl-L-lysyl-[protein] + acetyl-CoA = N(6)-biotinyl-L-lysyl-[protein] + malonyl-CoA</text>
        <dbReference type="Rhea" id="RHEA:54728"/>
        <dbReference type="Rhea" id="RHEA-COMP:10505"/>
        <dbReference type="Rhea" id="RHEA-COMP:10506"/>
        <dbReference type="ChEBI" id="CHEBI:57288"/>
        <dbReference type="ChEBI" id="CHEBI:57384"/>
        <dbReference type="ChEBI" id="CHEBI:83144"/>
        <dbReference type="ChEBI" id="CHEBI:83145"/>
        <dbReference type="EC" id="2.1.3.15"/>
    </reaction>
</comment>
<comment type="pathway">
    <text evidence="1">Lipid metabolism; malonyl-CoA biosynthesis; malonyl-CoA from acetyl-CoA: step 1/1.</text>
</comment>
<comment type="subunit">
    <text evidence="1">Acetyl-CoA carboxylase is a heterohexamer composed of biotin carboxyl carrier protein (AccB), biotin carboxylase (AccC) and two subunits each of ACCase subunit alpha (AccA) and ACCase subunit beta (AccD).</text>
</comment>
<comment type="subcellular location">
    <subcellularLocation>
        <location evidence="1">Cytoplasm</location>
    </subcellularLocation>
</comment>
<comment type="similarity">
    <text evidence="1">Belongs to the AccA family.</text>
</comment>
<keyword id="KW-0067">ATP-binding</keyword>
<keyword id="KW-0963">Cytoplasm</keyword>
<keyword id="KW-0275">Fatty acid biosynthesis</keyword>
<keyword id="KW-0276">Fatty acid metabolism</keyword>
<keyword id="KW-0444">Lipid biosynthesis</keyword>
<keyword id="KW-0443">Lipid metabolism</keyword>
<keyword id="KW-0547">Nucleotide-binding</keyword>
<keyword id="KW-1185">Reference proteome</keyword>
<keyword id="KW-0808">Transferase</keyword>
<reference key="1">
    <citation type="journal article" date="2008" name="J. Bacteriol.">
        <title>The pangenome structure of Escherichia coli: comparative genomic analysis of E. coli commensal and pathogenic isolates.</title>
        <authorList>
            <person name="Rasko D.A."/>
            <person name="Rosovitz M.J."/>
            <person name="Myers G.S.A."/>
            <person name="Mongodin E.F."/>
            <person name="Fricke W.F."/>
            <person name="Gajer P."/>
            <person name="Crabtree J."/>
            <person name="Sebaihia M."/>
            <person name="Thomson N.R."/>
            <person name="Chaudhuri R."/>
            <person name="Henderson I.R."/>
            <person name="Sperandio V."/>
            <person name="Ravel J."/>
        </authorList>
    </citation>
    <scope>NUCLEOTIDE SEQUENCE [LARGE SCALE GENOMIC DNA]</scope>
    <source>
        <strain>E24377A / ETEC</strain>
    </source>
</reference>
<organism>
    <name type="scientific">Escherichia coli O139:H28 (strain E24377A / ETEC)</name>
    <dbReference type="NCBI Taxonomy" id="331111"/>
    <lineage>
        <taxon>Bacteria</taxon>
        <taxon>Pseudomonadati</taxon>
        <taxon>Pseudomonadota</taxon>
        <taxon>Gammaproteobacteria</taxon>
        <taxon>Enterobacterales</taxon>
        <taxon>Enterobacteriaceae</taxon>
        <taxon>Escherichia</taxon>
    </lineage>
</organism>